<reference evidence="9" key="1">
    <citation type="journal article" date="2009" name="Nat. Biotechnol.">
        <title>Genome sequence of the recombinant protein production host Pichia pastoris.</title>
        <authorList>
            <person name="De Schutter K."/>
            <person name="Lin Y.-C."/>
            <person name="Tiels P."/>
            <person name="Van Hecke A."/>
            <person name="Glinka S."/>
            <person name="Weber-Lehmann J."/>
            <person name="Rouze P."/>
            <person name="Van de Peer Y."/>
            <person name="Callewaert N."/>
        </authorList>
    </citation>
    <scope>NUCLEOTIDE SEQUENCE [LARGE SCALE GENOMIC DNA]</scope>
    <source>
        <strain evidence="9">GS115 / ATCC 20864</strain>
    </source>
</reference>
<reference evidence="6" key="2">
    <citation type="journal article" date="2010" name="FEMS Yeast Res.">
        <title>Activation of a peroxisomal Pichia pastoris D-amino acid oxidase, which uses d-alanine as a preferred substrate, depends on pyruvate carboxylase.</title>
        <authorList>
            <person name="Klompmaker S.H."/>
            <person name="Kilic A."/>
            <person name="Baerends R.J."/>
            <person name="Veenhuis M."/>
            <person name="van der Klei I.J."/>
        </authorList>
    </citation>
    <scope>FUNCTION</scope>
    <scope>CATALYTIC ACTIVITY</scope>
    <scope>BIOPHYSICOCHEMICAL PROPERTIES</scope>
    <scope>SUBCELLULAR LOCATION</scope>
    <scope>DISRUPTION PHENOTYPE</scope>
</reference>
<dbReference type="EC" id="1.4.3.3" evidence="7"/>
<dbReference type="EMBL" id="FN392321">
    <property type="protein sequence ID" value="CAY70455.1"/>
    <property type="molecule type" value="Genomic_DNA"/>
</dbReference>
<dbReference type="RefSeq" id="XP_002492634.1">
    <property type="nucleotide sequence ID" value="XM_002492589.1"/>
</dbReference>
<dbReference type="SMR" id="C4R4G9"/>
<dbReference type="STRING" id="644223.C4R4G9"/>
<dbReference type="EnsemblFungi" id="CAY70455">
    <property type="protein sequence ID" value="CAY70455"/>
    <property type="gene ID" value="PAS_chr3_0406"/>
</dbReference>
<dbReference type="GeneID" id="8199538"/>
<dbReference type="KEGG" id="ppa:PAS_chr3_0406"/>
<dbReference type="eggNOG" id="KOG3923">
    <property type="taxonomic scope" value="Eukaryota"/>
</dbReference>
<dbReference type="HOGENOM" id="CLU_034311_1_0_1"/>
<dbReference type="InParanoid" id="C4R4G9"/>
<dbReference type="OMA" id="DEKCYPT"/>
<dbReference type="OrthoDB" id="2015447at2759"/>
<dbReference type="Proteomes" id="UP000000314">
    <property type="component" value="Chromosome 3"/>
</dbReference>
<dbReference type="GO" id="GO:0005782">
    <property type="term" value="C:peroxisomal matrix"/>
    <property type="evidence" value="ECO:0000250"/>
    <property type="project" value="UniProtKB"/>
</dbReference>
<dbReference type="GO" id="GO:0005777">
    <property type="term" value="C:peroxisome"/>
    <property type="evidence" value="ECO:0000314"/>
    <property type="project" value="UniProtKB"/>
</dbReference>
<dbReference type="GO" id="GO:0003884">
    <property type="term" value="F:D-amino-acid oxidase activity"/>
    <property type="evidence" value="ECO:0000315"/>
    <property type="project" value="UniProtKB"/>
</dbReference>
<dbReference type="GO" id="GO:0071949">
    <property type="term" value="F:FAD binding"/>
    <property type="evidence" value="ECO:0007669"/>
    <property type="project" value="InterPro"/>
</dbReference>
<dbReference type="GO" id="GO:0046436">
    <property type="term" value="P:D-alanine metabolic process"/>
    <property type="evidence" value="ECO:0007669"/>
    <property type="project" value="EnsemblFungi"/>
</dbReference>
<dbReference type="GO" id="GO:0019478">
    <property type="term" value="P:D-amino acid catabolic process"/>
    <property type="evidence" value="ECO:0007669"/>
    <property type="project" value="TreeGrafter"/>
</dbReference>
<dbReference type="GO" id="GO:0046416">
    <property type="term" value="P:D-amino acid metabolic process"/>
    <property type="evidence" value="ECO:0000315"/>
    <property type="project" value="UniProtKB"/>
</dbReference>
<dbReference type="GO" id="GO:1902114">
    <property type="term" value="P:D-valine metabolic process"/>
    <property type="evidence" value="ECO:0007669"/>
    <property type="project" value="EnsemblFungi"/>
</dbReference>
<dbReference type="GO" id="GO:0019740">
    <property type="term" value="P:nitrogen utilization"/>
    <property type="evidence" value="ECO:0000315"/>
    <property type="project" value="UniProtKB"/>
</dbReference>
<dbReference type="Gene3D" id="3.30.9.10">
    <property type="entry name" value="D-Amino Acid Oxidase, subunit A, domain 2"/>
    <property type="match status" value="1"/>
</dbReference>
<dbReference type="Gene3D" id="3.40.50.720">
    <property type="entry name" value="NAD(P)-binding Rossmann-like Domain"/>
    <property type="match status" value="1"/>
</dbReference>
<dbReference type="InterPro" id="IPR006181">
    <property type="entry name" value="D-amino_acid_oxidase_CS"/>
</dbReference>
<dbReference type="InterPro" id="IPR023209">
    <property type="entry name" value="DAO"/>
</dbReference>
<dbReference type="InterPro" id="IPR006076">
    <property type="entry name" value="FAD-dep_OxRdtase"/>
</dbReference>
<dbReference type="PANTHER" id="PTHR11530">
    <property type="entry name" value="D-AMINO ACID OXIDASE"/>
    <property type="match status" value="1"/>
</dbReference>
<dbReference type="PANTHER" id="PTHR11530:SF11">
    <property type="entry name" value="D-ASPARTATE OXIDASE"/>
    <property type="match status" value="1"/>
</dbReference>
<dbReference type="Pfam" id="PF01266">
    <property type="entry name" value="DAO"/>
    <property type="match status" value="1"/>
</dbReference>
<dbReference type="PIRSF" id="PIRSF000189">
    <property type="entry name" value="D-aa_oxidase"/>
    <property type="match status" value="1"/>
</dbReference>
<dbReference type="SUPFAM" id="SSF54373">
    <property type="entry name" value="FAD-linked reductases, C-terminal domain"/>
    <property type="match status" value="1"/>
</dbReference>
<dbReference type="SUPFAM" id="SSF51971">
    <property type="entry name" value="Nucleotide-binding domain"/>
    <property type="match status" value="1"/>
</dbReference>
<dbReference type="PROSITE" id="PS00677">
    <property type="entry name" value="DAO"/>
    <property type="match status" value="1"/>
</dbReference>
<protein>
    <recommendedName>
        <fullName evidence="5">D-amino-acid oxidase</fullName>
        <shortName evidence="6">DAAO</shortName>
        <shortName evidence="6">DAMOX</shortName>
        <shortName evidence="5">DAO</shortName>
        <ecNumber evidence="7">1.4.3.3</ecNumber>
    </recommendedName>
</protein>
<feature type="chain" id="PRO_0000460036" description="D-amino-acid oxidase">
    <location>
        <begin position="1"/>
        <end position="344"/>
    </location>
</feature>
<feature type="binding site" evidence="1">
    <location>
        <position position="11"/>
    </location>
    <ligand>
        <name>FAD</name>
        <dbReference type="ChEBI" id="CHEBI:57692"/>
    </ligand>
</feature>
<feature type="binding site" evidence="1">
    <location>
        <position position="14"/>
    </location>
    <ligand>
        <name>FAD</name>
        <dbReference type="ChEBI" id="CHEBI:57692"/>
    </ligand>
</feature>
<feature type="binding site" evidence="2">
    <location>
        <position position="49"/>
    </location>
    <ligand>
        <name>FAD</name>
        <dbReference type="ChEBI" id="CHEBI:57692"/>
    </ligand>
</feature>
<feature type="binding site" evidence="2">
    <location>
        <position position="53"/>
    </location>
    <ligand>
        <name>FAD</name>
        <dbReference type="ChEBI" id="CHEBI:57692"/>
    </ligand>
</feature>
<feature type="binding site" evidence="2">
    <location>
        <position position="55"/>
    </location>
    <ligand>
        <name>FAD</name>
        <dbReference type="ChEBI" id="CHEBI:57692"/>
    </ligand>
</feature>
<feature type="binding site" evidence="2">
    <location>
        <position position="167"/>
    </location>
    <ligand>
        <name>FAD</name>
        <dbReference type="ChEBI" id="CHEBI:57692"/>
    </ligand>
</feature>
<feature type="binding site" evidence="2">
    <location>
        <position position="229"/>
    </location>
    <ligand>
        <name>(R)-lactate</name>
        <dbReference type="ChEBI" id="CHEBI:16004"/>
    </ligand>
</feature>
<feature type="binding site" evidence="2">
    <location>
        <position position="229"/>
    </location>
    <ligand>
        <name>anthranilate</name>
        <dbReference type="ChEBI" id="CHEBI:16567"/>
        <label>1</label>
    </ligand>
</feature>
<feature type="binding site" evidence="2">
    <location>
        <position position="290"/>
    </location>
    <ligand>
        <name>(R)-lactate</name>
        <dbReference type="ChEBI" id="CHEBI:16004"/>
    </ligand>
</feature>
<feature type="binding site" evidence="2">
    <location>
        <position position="290"/>
    </location>
    <ligand>
        <name>anthranilate</name>
        <dbReference type="ChEBI" id="CHEBI:16567"/>
        <label>1</label>
    </ligand>
</feature>
<feature type="binding site" evidence="2">
    <location>
        <position position="290"/>
    </location>
    <ligand>
        <name>FAD</name>
        <dbReference type="ChEBI" id="CHEBI:57692"/>
    </ligand>
</feature>
<feature type="binding site" evidence="2">
    <location>
        <position position="321"/>
    </location>
    <ligand>
        <name>FAD</name>
        <dbReference type="ChEBI" id="CHEBI:57692"/>
    </ligand>
</feature>
<feature type="binding site" evidence="2">
    <location>
        <position position="324"/>
    </location>
    <ligand>
        <name>FAD</name>
        <dbReference type="ChEBI" id="CHEBI:57692"/>
    </ligand>
</feature>
<feature type="binding site" evidence="2">
    <location>
        <position position="325"/>
    </location>
    <ligand>
        <name>FAD</name>
        <dbReference type="ChEBI" id="CHEBI:57692"/>
    </ligand>
</feature>
<feature type="binding site" evidence="2">
    <location>
        <position position="326"/>
    </location>
    <ligand>
        <name>FAD</name>
        <dbReference type="ChEBI" id="CHEBI:57692"/>
    </ligand>
</feature>
<organism evidence="9">
    <name type="scientific">Komagataella phaffii (strain GS115 / ATCC 20864)</name>
    <name type="common">Yeast</name>
    <name type="synonym">Pichia pastoris</name>
    <dbReference type="NCBI Taxonomy" id="644223"/>
    <lineage>
        <taxon>Eukaryota</taxon>
        <taxon>Fungi</taxon>
        <taxon>Dikarya</taxon>
        <taxon>Ascomycota</taxon>
        <taxon>Saccharomycotina</taxon>
        <taxon>Pichiomycetes</taxon>
        <taxon>Pichiales</taxon>
        <taxon>Pichiaceae</taxon>
        <taxon>Komagataella</taxon>
    </lineage>
</organism>
<comment type="function">
    <text evidence="4">Catalyzes the oxidative deamination of D-amino acids with broad substrate specificity (PubMed:20550580). Enables the organism to utilize D-amino acids as a source of nutrients (PubMed:20550580). Enables the organism to utilize D-alanine as a source of nitrogen (PubMed:20550580).</text>
</comment>
<comment type="catalytic activity">
    <reaction evidence="7">
        <text>a D-alpha-amino acid + O2 + H2O = a 2-oxocarboxylate + H2O2 + NH4(+)</text>
        <dbReference type="Rhea" id="RHEA:21816"/>
        <dbReference type="ChEBI" id="CHEBI:15377"/>
        <dbReference type="ChEBI" id="CHEBI:15379"/>
        <dbReference type="ChEBI" id="CHEBI:16240"/>
        <dbReference type="ChEBI" id="CHEBI:28938"/>
        <dbReference type="ChEBI" id="CHEBI:35179"/>
        <dbReference type="ChEBI" id="CHEBI:59871"/>
        <dbReference type="EC" id="1.4.3.3"/>
    </reaction>
    <physiologicalReaction direction="left-to-right" evidence="7">
        <dbReference type="Rhea" id="RHEA:21817"/>
    </physiologicalReaction>
</comment>
<comment type="catalytic activity">
    <reaction evidence="7">
        <text>D-alanine + O2 + H2O = pyruvate + H2O2 + NH4(+)</text>
        <dbReference type="Rhea" id="RHEA:22688"/>
        <dbReference type="ChEBI" id="CHEBI:15361"/>
        <dbReference type="ChEBI" id="CHEBI:15377"/>
        <dbReference type="ChEBI" id="CHEBI:15379"/>
        <dbReference type="ChEBI" id="CHEBI:16240"/>
        <dbReference type="ChEBI" id="CHEBI:28938"/>
        <dbReference type="ChEBI" id="CHEBI:57416"/>
    </reaction>
    <physiologicalReaction direction="left-to-right" evidence="7">
        <dbReference type="Rhea" id="RHEA:22689"/>
    </physiologicalReaction>
</comment>
<comment type="cofactor">
    <cofactor evidence="3">
        <name>FAD</name>
        <dbReference type="ChEBI" id="CHEBI:57692"/>
    </cofactor>
</comment>
<comment type="biophysicochemical properties">
    <phDependence>
        <text evidence="4">Optimum pH is 9.6.</text>
    </phDependence>
</comment>
<comment type="subcellular location">
    <subcellularLocation>
        <location evidence="4">Peroxisome</location>
    </subcellularLocation>
</comment>
<comment type="disruption phenotype">
    <text evidence="4">Unable to utilize D-alanine as a nitrogen source.</text>
</comment>
<comment type="similarity">
    <text evidence="6">Belongs to the DAMOX/DASOX family.</text>
</comment>
<name>OXDA_KOMPG</name>
<evidence type="ECO:0000250" key="1">
    <source>
        <dbReference type="UniProtKB" id="A0A499UB99"/>
    </source>
</evidence>
<evidence type="ECO:0000250" key="2">
    <source>
        <dbReference type="UniProtKB" id="P80324"/>
    </source>
</evidence>
<evidence type="ECO:0000255" key="3">
    <source>
        <dbReference type="PIRSR" id="PIRSR000189-1"/>
    </source>
</evidence>
<evidence type="ECO:0000269" key="4">
    <source>
    </source>
</evidence>
<evidence type="ECO:0000303" key="5">
    <source>
    </source>
</evidence>
<evidence type="ECO:0000305" key="6"/>
<evidence type="ECO:0000305" key="7">
    <source>
    </source>
</evidence>
<evidence type="ECO:0000312" key="8">
    <source>
        <dbReference type="EMBL" id="CAY70455.1"/>
    </source>
</evidence>
<evidence type="ECO:0000312" key="9">
    <source>
        <dbReference type="Proteomes" id="UP000000314"/>
    </source>
</evidence>
<sequence>MTDSKYVIIGAGISGLYTAWSLIDKGTGPSDIKVVAEFLPGDQSTLYTSPWAGGNFSLITSTDERSMKFDKFTYTNLHRIQELLGGPECGLDMLPSTEMFEQELDHAKLDSISQYLKEYRPMTKEEMPEGVVSGVKFLTWNFNCPLFLANFQKHLAAIGVTFERSKIDHISSVFSPSVDAVFNCTGIGAASLGGVKDENVFPTRGQVVVVRAPHIRENRFRWRPDSDTYVIPRPFSDGSIVMGGFFQEGNWSGNTYGYETEDILKRGLELYPEIGKRNELKIIREAAGLRPSRKGGVRIEVEHFDQVNGKDRYIVHNYGASGYGYQSGLGMANEATDMYFEAAK</sequence>
<gene>
    <name evidence="5" type="primary">DAO1</name>
    <name evidence="8" type="ordered locus">PAS_chr3_0406</name>
</gene>
<accession>C4R4G9</accession>
<keyword id="KW-0274">FAD</keyword>
<keyword id="KW-0285">Flavoprotein</keyword>
<keyword id="KW-0560">Oxidoreductase</keyword>
<keyword id="KW-0576">Peroxisome</keyword>
<keyword id="KW-1185">Reference proteome</keyword>
<proteinExistence type="evidence at protein level"/>